<gene>
    <name evidence="11" type="primary">Bfsp2</name>
</gene>
<proteinExistence type="evidence at protein level"/>
<feature type="initiator methionine" description="Removed" evidence="2">
    <location>
        <position position="1"/>
    </location>
</feature>
<feature type="chain" id="PRO_0000448680" description="Phakinin" evidence="9">
    <location>
        <begin position="2"/>
        <end position="416"/>
    </location>
</feature>
<feature type="domain" description="IF rod" evidence="5">
    <location>
        <begin position="105"/>
        <end position="416"/>
    </location>
</feature>
<feature type="region of interest" description="Disordered" evidence="6">
    <location>
        <begin position="1"/>
        <end position="48"/>
    </location>
</feature>
<feature type="region of interest" description="Head" evidence="1">
    <location>
        <begin position="2"/>
        <end position="115"/>
    </location>
</feature>
<feature type="region of interest" description="Tail" evidence="1">
    <location>
        <begin position="397"/>
        <end position="416"/>
    </location>
</feature>
<feature type="coiled-coil region" evidence="4">
    <location>
        <begin position="199"/>
        <end position="240"/>
    </location>
</feature>
<feature type="coiled-coil region" evidence="4">
    <location>
        <begin position="314"/>
        <end position="391"/>
    </location>
</feature>
<feature type="compositionally biased region" description="Polar residues" evidence="6">
    <location>
        <begin position="28"/>
        <end position="48"/>
    </location>
</feature>
<feature type="modified residue" description="N-acetylserine" evidence="2">
    <location>
        <position position="2"/>
    </location>
</feature>
<feature type="modified residue" description="Phosphoserine" evidence="2">
    <location>
        <position position="27"/>
    </location>
</feature>
<feature type="modified residue" description="Phosphoserine" evidence="2">
    <location>
        <position position="33"/>
    </location>
</feature>
<feature type="modified residue" description="Phosphoserine" evidence="2">
    <location>
        <position position="36"/>
    </location>
</feature>
<feature type="modified residue" description="Phosphoserine" evidence="2">
    <location>
        <position position="91"/>
    </location>
</feature>
<name>BFSP2_RAT</name>
<keyword id="KW-0007">Acetylation</keyword>
<keyword id="KW-1003">Cell membrane</keyword>
<keyword id="KW-0175">Coiled coil</keyword>
<keyword id="KW-0963">Cytoplasm</keyword>
<keyword id="KW-0206">Cytoskeleton</keyword>
<keyword id="KW-0273">Eye lens protein</keyword>
<keyword id="KW-0403">Intermediate filament</keyword>
<keyword id="KW-0472">Membrane</keyword>
<keyword id="KW-0597">Phosphoprotein</keyword>
<keyword id="KW-1185">Reference proteome</keyword>
<keyword id="KW-0716">Sensory transduction</keyword>
<keyword id="KW-0844">Vision</keyword>
<dbReference type="EMBL" id="AABR07071368">
    <property type="status" value="NOT_ANNOTATED_CDS"/>
    <property type="molecule type" value="Genomic_DNA"/>
</dbReference>
<dbReference type="RefSeq" id="NP_001264363.1">
    <property type="nucleotide sequence ID" value="NM_001277434.2"/>
</dbReference>
<dbReference type="SMR" id="D3ZER2"/>
<dbReference type="FunCoup" id="D3ZER2">
    <property type="interactions" value="316"/>
</dbReference>
<dbReference type="STRING" id="10116.ENSRNOP00000029527"/>
<dbReference type="PhosphoSitePlus" id="D3ZER2"/>
<dbReference type="jPOST" id="D3ZER2"/>
<dbReference type="PaxDb" id="10116-ENSRNOP00000029527"/>
<dbReference type="Ensembl" id="ENSRNOT00000032376.8">
    <property type="protein sequence ID" value="ENSRNOP00000029527.5"/>
    <property type="gene ID" value="ENSRNOG00000010899.9"/>
</dbReference>
<dbReference type="GeneID" id="501046"/>
<dbReference type="KEGG" id="rno:501046"/>
<dbReference type="AGR" id="RGD:1591927"/>
<dbReference type="CTD" id="8419"/>
<dbReference type="RGD" id="1591927">
    <property type="gene designation" value="Bfsp2"/>
</dbReference>
<dbReference type="eggNOG" id="ENOG502QTD1">
    <property type="taxonomic scope" value="Eukaryota"/>
</dbReference>
<dbReference type="GeneTree" id="ENSGT00940000159820"/>
<dbReference type="HOGENOM" id="CLU_012560_0_0_1"/>
<dbReference type="InParanoid" id="D3ZER2"/>
<dbReference type="OrthoDB" id="67362at9989"/>
<dbReference type="TreeFam" id="TF332742"/>
<dbReference type="PRO" id="PR:D3ZER2"/>
<dbReference type="Proteomes" id="UP000002494">
    <property type="component" value="Chromosome 8"/>
</dbReference>
<dbReference type="Bgee" id="ENSRNOG00000010899">
    <property type="expression patterns" value="Expressed in thymus and 8 other cell types or tissues"/>
</dbReference>
<dbReference type="GO" id="GO:0005938">
    <property type="term" value="C:cell cortex"/>
    <property type="evidence" value="ECO:0007669"/>
    <property type="project" value="UniProtKB-SubCell"/>
</dbReference>
<dbReference type="GO" id="GO:0005737">
    <property type="term" value="C:cytoplasm"/>
    <property type="evidence" value="ECO:0000266"/>
    <property type="project" value="RGD"/>
</dbReference>
<dbReference type="GO" id="GO:0005856">
    <property type="term" value="C:cytoskeleton"/>
    <property type="evidence" value="ECO:0000318"/>
    <property type="project" value="GO_Central"/>
</dbReference>
<dbReference type="GO" id="GO:0005882">
    <property type="term" value="C:intermediate filament"/>
    <property type="evidence" value="ECO:0000250"/>
    <property type="project" value="UniProtKB"/>
</dbReference>
<dbReference type="GO" id="GO:0005886">
    <property type="term" value="C:plasma membrane"/>
    <property type="evidence" value="ECO:0007669"/>
    <property type="project" value="UniProtKB-SubCell"/>
</dbReference>
<dbReference type="GO" id="GO:0005212">
    <property type="term" value="F:structural constituent of eye lens"/>
    <property type="evidence" value="ECO:0000266"/>
    <property type="project" value="RGD"/>
</dbReference>
<dbReference type="GO" id="GO:0048469">
    <property type="term" value="P:cell maturation"/>
    <property type="evidence" value="ECO:0000266"/>
    <property type="project" value="RGD"/>
</dbReference>
<dbReference type="GO" id="GO:0007010">
    <property type="term" value="P:cytoskeleton organization"/>
    <property type="evidence" value="ECO:0000266"/>
    <property type="project" value="RGD"/>
</dbReference>
<dbReference type="GO" id="GO:0045104">
    <property type="term" value="P:intermediate filament cytoskeleton organization"/>
    <property type="evidence" value="ECO:0000266"/>
    <property type="project" value="RGD"/>
</dbReference>
<dbReference type="GO" id="GO:0045109">
    <property type="term" value="P:intermediate filament organization"/>
    <property type="evidence" value="ECO:0000250"/>
    <property type="project" value="UniProtKB"/>
</dbReference>
<dbReference type="GO" id="GO:0070307">
    <property type="term" value="P:lens fiber cell development"/>
    <property type="evidence" value="ECO:0000266"/>
    <property type="project" value="RGD"/>
</dbReference>
<dbReference type="GO" id="GO:0007601">
    <property type="term" value="P:visual perception"/>
    <property type="evidence" value="ECO:0007669"/>
    <property type="project" value="UniProtKB-KW"/>
</dbReference>
<dbReference type="Gene3D" id="1.20.5.170">
    <property type="match status" value="1"/>
</dbReference>
<dbReference type="Gene3D" id="1.20.5.500">
    <property type="entry name" value="Single helix bin"/>
    <property type="match status" value="1"/>
</dbReference>
<dbReference type="Gene3D" id="1.20.5.1160">
    <property type="entry name" value="Vasodilator-stimulated phosphoprotein"/>
    <property type="match status" value="1"/>
</dbReference>
<dbReference type="InterPro" id="IPR039008">
    <property type="entry name" value="IF_rod_dom"/>
</dbReference>
<dbReference type="InterPro" id="IPR002957">
    <property type="entry name" value="Keratin_I"/>
</dbReference>
<dbReference type="PANTHER" id="PTHR23239">
    <property type="entry name" value="INTERMEDIATE FILAMENT"/>
    <property type="match status" value="1"/>
</dbReference>
<dbReference type="PANTHER" id="PTHR23239:SF32">
    <property type="entry name" value="PHAKININ"/>
    <property type="match status" value="1"/>
</dbReference>
<dbReference type="Pfam" id="PF00038">
    <property type="entry name" value="Filament"/>
    <property type="match status" value="1"/>
</dbReference>
<dbReference type="PRINTS" id="PR01248">
    <property type="entry name" value="TYPE1KERATIN"/>
</dbReference>
<dbReference type="SMART" id="SM01391">
    <property type="entry name" value="Filament"/>
    <property type="match status" value="1"/>
</dbReference>
<dbReference type="SUPFAM" id="SSF64593">
    <property type="entry name" value="Intermediate filament protein, coiled coil region"/>
    <property type="match status" value="1"/>
</dbReference>
<dbReference type="PROSITE" id="PS51842">
    <property type="entry name" value="IF_ROD_2"/>
    <property type="match status" value="1"/>
</dbReference>
<reference evidence="10" key="1">
    <citation type="journal article" date="2004" name="Nature">
        <title>Genome sequence of the Brown Norway rat yields insights into mammalian evolution.</title>
        <authorList>
            <person name="Gibbs R.A."/>
            <person name="Weinstock G.M."/>
            <person name="Metzker M.L."/>
            <person name="Muzny D.M."/>
            <person name="Sodergren E.J."/>
            <person name="Scherer S."/>
            <person name="Scott G."/>
            <person name="Steffen D."/>
            <person name="Worley K.C."/>
            <person name="Burch P.E."/>
            <person name="Okwuonu G."/>
            <person name="Hines S."/>
            <person name="Lewis L."/>
            <person name="Deramo C."/>
            <person name="Delgado O."/>
            <person name="Dugan-Rocha S."/>
            <person name="Miner G."/>
            <person name="Morgan M."/>
            <person name="Hawes A."/>
            <person name="Gill R."/>
            <person name="Holt R.A."/>
            <person name="Adams M.D."/>
            <person name="Amanatides P.G."/>
            <person name="Baden-Tillson H."/>
            <person name="Barnstead M."/>
            <person name="Chin S."/>
            <person name="Evans C.A."/>
            <person name="Ferriera S."/>
            <person name="Fosler C."/>
            <person name="Glodek A."/>
            <person name="Gu Z."/>
            <person name="Jennings D."/>
            <person name="Kraft C.L."/>
            <person name="Nguyen T."/>
            <person name="Pfannkoch C.M."/>
            <person name="Sitter C."/>
            <person name="Sutton G.G."/>
            <person name="Venter J.C."/>
            <person name="Woodage T."/>
            <person name="Smith D."/>
            <person name="Lee H.-M."/>
            <person name="Gustafson E."/>
            <person name="Cahill P."/>
            <person name="Kana A."/>
            <person name="Doucette-Stamm L."/>
            <person name="Weinstock K."/>
            <person name="Fechtel K."/>
            <person name="Weiss R.B."/>
            <person name="Dunn D.M."/>
            <person name="Green E.D."/>
            <person name="Blakesley R.W."/>
            <person name="Bouffard G.G."/>
            <person name="De Jong P.J."/>
            <person name="Osoegawa K."/>
            <person name="Zhu B."/>
            <person name="Marra M."/>
            <person name="Schein J."/>
            <person name="Bosdet I."/>
            <person name="Fjell C."/>
            <person name="Jones S."/>
            <person name="Krzywinski M."/>
            <person name="Mathewson C."/>
            <person name="Siddiqui A."/>
            <person name="Wye N."/>
            <person name="McPherson J."/>
            <person name="Zhao S."/>
            <person name="Fraser C.M."/>
            <person name="Shetty J."/>
            <person name="Shatsman S."/>
            <person name="Geer K."/>
            <person name="Chen Y."/>
            <person name="Abramzon S."/>
            <person name="Nierman W.C."/>
            <person name="Havlak P.H."/>
            <person name="Chen R."/>
            <person name="Durbin K.J."/>
            <person name="Egan A."/>
            <person name="Ren Y."/>
            <person name="Song X.-Z."/>
            <person name="Li B."/>
            <person name="Liu Y."/>
            <person name="Qin X."/>
            <person name="Cawley S."/>
            <person name="Cooney A.J."/>
            <person name="D'Souza L.M."/>
            <person name="Martin K."/>
            <person name="Wu J.Q."/>
            <person name="Gonzalez-Garay M.L."/>
            <person name="Jackson A.R."/>
            <person name="Kalafus K.J."/>
            <person name="McLeod M.P."/>
            <person name="Milosavljevic A."/>
            <person name="Virk D."/>
            <person name="Volkov A."/>
            <person name="Wheeler D.A."/>
            <person name="Zhang Z."/>
            <person name="Bailey J.A."/>
            <person name="Eichler E.E."/>
            <person name="Tuzun E."/>
            <person name="Birney E."/>
            <person name="Mongin E."/>
            <person name="Ureta-Vidal A."/>
            <person name="Woodwark C."/>
            <person name="Zdobnov E."/>
            <person name="Bork P."/>
            <person name="Suyama M."/>
            <person name="Torrents D."/>
            <person name="Alexandersson M."/>
            <person name="Trask B.J."/>
            <person name="Young J.M."/>
            <person name="Huang H."/>
            <person name="Wang H."/>
            <person name="Xing H."/>
            <person name="Daniels S."/>
            <person name="Gietzen D."/>
            <person name="Schmidt J."/>
            <person name="Stevens K."/>
            <person name="Vitt U."/>
            <person name="Wingrove J."/>
            <person name="Camara F."/>
            <person name="Mar Alba M."/>
            <person name="Abril J.F."/>
            <person name="Guigo R."/>
            <person name="Smit A."/>
            <person name="Dubchak I."/>
            <person name="Rubin E.M."/>
            <person name="Couronne O."/>
            <person name="Poliakov A."/>
            <person name="Huebner N."/>
            <person name="Ganten D."/>
            <person name="Goesele C."/>
            <person name="Hummel O."/>
            <person name="Kreitler T."/>
            <person name="Lee Y.-A."/>
            <person name="Monti J."/>
            <person name="Schulz H."/>
            <person name="Zimdahl H."/>
            <person name="Himmelbauer H."/>
            <person name="Lehrach H."/>
            <person name="Jacob H.J."/>
            <person name="Bromberg S."/>
            <person name="Gullings-Handley J."/>
            <person name="Jensen-Seaman M.I."/>
            <person name="Kwitek A.E."/>
            <person name="Lazar J."/>
            <person name="Pasko D."/>
            <person name="Tonellato P.J."/>
            <person name="Twigger S."/>
            <person name="Ponting C.P."/>
            <person name="Duarte J.M."/>
            <person name="Rice S."/>
            <person name="Goodstadt L."/>
            <person name="Beatson S.A."/>
            <person name="Emes R.D."/>
            <person name="Winter E.E."/>
            <person name="Webber C."/>
            <person name="Brandt P."/>
            <person name="Nyakatura G."/>
            <person name="Adetobi M."/>
            <person name="Chiaromonte F."/>
            <person name="Elnitski L."/>
            <person name="Eswara P."/>
            <person name="Hardison R.C."/>
            <person name="Hou M."/>
            <person name="Kolbe D."/>
            <person name="Makova K."/>
            <person name="Miller W."/>
            <person name="Nekrutenko A."/>
            <person name="Riemer C."/>
            <person name="Schwartz S."/>
            <person name="Taylor J."/>
            <person name="Yang S."/>
            <person name="Zhang Y."/>
            <person name="Lindpaintner K."/>
            <person name="Andrews T.D."/>
            <person name="Caccamo M."/>
            <person name="Clamp M."/>
            <person name="Clarke L."/>
            <person name="Curwen V."/>
            <person name="Durbin R.M."/>
            <person name="Eyras E."/>
            <person name="Searle S.M."/>
            <person name="Cooper G.M."/>
            <person name="Batzoglou S."/>
            <person name="Brudno M."/>
            <person name="Sidow A."/>
            <person name="Stone E.A."/>
            <person name="Payseur B.A."/>
            <person name="Bourque G."/>
            <person name="Lopez-Otin C."/>
            <person name="Puente X.S."/>
            <person name="Chakrabarti K."/>
            <person name="Chatterji S."/>
            <person name="Dewey C."/>
            <person name="Pachter L."/>
            <person name="Bray N."/>
            <person name="Yap V.B."/>
            <person name="Caspi A."/>
            <person name="Tesler G."/>
            <person name="Pevzner P.A."/>
            <person name="Haussler D."/>
            <person name="Roskin K.M."/>
            <person name="Baertsch R."/>
            <person name="Clawson H."/>
            <person name="Furey T.S."/>
            <person name="Hinrichs A.S."/>
            <person name="Karolchik D."/>
            <person name="Kent W.J."/>
            <person name="Rosenbloom K.R."/>
            <person name="Trumbower H."/>
            <person name="Weirauch M."/>
            <person name="Cooper D.N."/>
            <person name="Stenson P.D."/>
            <person name="Ma B."/>
            <person name="Brent M."/>
            <person name="Arumugam M."/>
            <person name="Shteynberg D."/>
            <person name="Copley R.R."/>
            <person name="Taylor M.S."/>
            <person name="Riethman H."/>
            <person name="Mudunuri U."/>
            <person name="Peterson J."/>
            <person name="Guyer M."/>
            <person name="Felsenfeld A."/>
            <person name="Old S."/>
            <person name="Mockrin S."/>
            <person name="Collins F.S."/>
        </authorList>
    </citation>
    <scope>NUCLEOTIDE SEQUENCE [LARGE SCALE GENOMIC DNA]</scope>
    <source>
        <strain evidence="10">Brown Norway</strain>
    </source>
</reference>
<reference evidence="9" key="2">
    <citation type="journal article" date="2008" name="Mol. Vis.">
        <title>The function of filensin and phakinin in lens transparency.</title>
        <authorList>
            <person name="Oka M."/>
            <person name="Kudo H."/>
            <person name="Sugama N."/>
            <person name="Asami Y."/>
            <person name="Takehana M."/>
        </authorList>
    </citation>
    <scope>SUBCELLULAR LOCATION</scope>
    <scope>TISSUE SPECIFICITY</scope>
</reference>
<organism evidence="10">
    <name type="scientific">Rattus norvegicus</name>
    <name type="common">Rat</name>
    <dbReference type="NCBI Taxonomy" id="10116"/>
    <lineage>
        <taxon>Eukaryota</taxon>
        <taxon>Metazoa</taxon>
        <taxon>Chordata</taxon>
        <taxon>Craniata</taxon>
        <taxon>Vertebrata</taxon>
        <taxon>Euteleostomi</taxon>
        <taxon>Mammalia</taxon>
        <taxon>Eutheria</taxon>
        <taxon>Euarchontoglires</taxon>
        <taxon>Glires</taxon>
        <taxon>Rodentia</taxon>
        <taxon>Myomorpha</taxon>
        <taxon>Muroidea</taxon>
        <taxon>Muridae</taxon>
        <taxon>Murinae</taxon>
        <taxon>Rattus</taxon>
    </lineage>
</organism>
<comment type="function">
    <text evidence="3">Required for the correct formation of lens intermediate filaments as part of a complex composed of BFSP1, BFSP2 and CRYAA (By similarity). Plays a role in maintenance of retinal lens optical clarity (By similarity).</text>
</comment>
<comment type="subunit">
    <text evidence="1 3">Part of a complex required for lens intermediate filament formation composed of BFSP1, BFSP2, and CRYAA (By similarity). Found in a complex composed of PPL (via C-terminal linker domain), BFSP1 and BFSP2 in the retinal lens (By similarity). Within the complex interacts with PPL (via C-terminal linker domain) and with BFSP1 (By similarity). Identified in a complex that contains VIM, EZR, AHNAK, BFSP1, BFSP2, ANK2, PLEC, PRX and spectrin (By similarity). Interacts with LGSN (By similarity). Interacts with VIM (By similarity).</text>
</comment>
<comment type="subcellular location">
    <subcellularLocation>
        <location evidence="7">Cell membrane</location>
        <topology evidence="2">Peripheral membrane protein</topology>
        <orientation evidence="2">Cytoplasmic side</orientation>
    </subcellularLocation>
    <subcellularLocation>
        <location evidence="7">Cytoplasm</location>
    </subcellularLocation>
    <subcellularLocation>
        <location evidence="2">Cytoplasm</location>
        <location evidence="2">Cytoskeleton</location>
    </subcellularLocation>
    <subcellularLocation>
        <location evidence="2">Cytoplasm</location>
        <location evidence="2">Cell cortex</location>
    </subcellularLocation>
    <text evidence="2">Expressed primarily at the plasma membrane in peripheral lens fiber cells, however also localizes to the cytoplasm in mature lens fiber cells.</text>
</comment>
<comment type="tissue specificity">
    <text evidence="7">Expressed in the deep and shallow cortices of the retina lens (at protein level).</text>
</comment>
<comment type="similarity">
    <text evidence="5">Belongs to the intermediate filament family.</text>
</comment>
<evidence type="ECO:0000250" key="1">
    <source>
        <dbReference type="UniProtKB" id="Q13515"/>
    </source>
</evidence>
<evidence type="ECO:0000250" key="2">
    <source>
        <dbReference type="UniProtKB" id="Q28177"/>
    </source>
</evidence>
<evidence type="ECO:0000250" key="3">
    <source>
        <dbReference type="UniProtKB" id="Q6NVD9"/>
    </source>
</evidence>
<evidence type="ECO:0000255" key="4"/>
<evidence type="ECO:0000255" key="5">
    <source>
        <dbReference type="PROSITE-ProRule" id="PRU01188"/>
    </source>
</evidence>
<evidence type="ECO:0000256" key="6">
    <source>
        <dbReference type="SAM" id="MobiDB-lite"/>
    </source>
</evidence>
<evidence type="ECO:0000269" key="7">
    <source>
    </source>
</evidence>
<evidence type="ECO:0000303" key="8">
    <source>
    </source>
</evidence>
<evidence type="ECO:0000305" key="9"/>
<evidence type="ECO:0000312" key="10">
    <source>
        <dbReference type="Proteomes" id="UP000002494"/>
    </source>
</evidence>
<evidence type="ECO:0000312" key="11">
    <source>
        <dbReference type="RGD" id="1591927"/>
    </source>
</evidence>
<accession>D3ZER2</accession>
<sequence>MSERRVAMDLPSGSNASMPLQRHRVSSLRGTRSPSSLDSPPASRTSAVGSLVRAPGVYVGVAPSGGIGGLGARVTRRALGISSVFLQGLRSSGLATAPAPGPERNHATAEDLGGCLVEYMTKVHALEQVSQELETQLRAHLESKAKRSGGWDALRASWASSYQQVGEAVLENARLMLQMETIQAGADDFKERYENEQPFRKAAEEEVSSLYKVIDEANLTKTDLEHQIESLKEELGSLSRSYEEDVKVLYKQLAGSELEQTDVPMGTGLDDVLETIRVQWERDVEKNRAEAGAVLQAKQQTEVVHVSQTQEEKLAAALSVELHDTSRQVQSLQAETESLRALKRGLENTLHDAKHWHDMELQNLGAVVGRLEAELAEIHSETEQQQQERAHLLACKGQLQKDVASYHALLDREESN</sequence>
<protein>
    <recommendedName>
        <fullName evidence="8">Phakinin</fullName>
    </recommendedName>
    <alternativeName>
        <fullName evidence="9">49 kDa cytoskeletal protein</fullName>
    </alternativeName>
    <alternativeName>
        <fullName evidence="1">Beaded filament structural protein 2</fullName>
    </alternativeName>
    <alternativeName>
        <fullName evidence="1">Lens fiber cell beaded filament protein CP 47</fullName>
        <shortName evidence="1">CP47</shortName>
    </alternativeName>
    <alternativeName>
        <fullName evidence="3">Lens fiber cell beaded filament protein CP 49</fullName>
        <shortName evidence="3">CP49</shortName>
    </alternativeName>
    <alternativeName>
        <fullName evidence="1">Lens intermediate filament-like light</fullName>
        <shortName evidence="1">LIFL-L</shortName>
    </alternativeName>
</protein>